<accession>B7J1N4</accession>
<proteinExistence type="inferred from homology"/>
<evidence type="ECO:0000255" key="1">
    <source>
        <dbReference type="HAMAP-Rule" id="MF_01007"/>
    </source>
</evidence>
<protein>
    <recommendedName>
        <fullName evidence="1">Ribosomal RNA small subunit methyltransferase H</fullName>
        <ecNumber evidence="1">2.1.1.199</ecNumber>
    </recommendedName>
    <alternativeName>
        <fullName evidence="1">16S rRNA m(4)C1402 methyltransferase</fullName>
    </alternativeName>
    <alternativeName>
        <fullName evidence="1">rRNA (cytosine-N(4)-)-methyltransferase RsmH</fullName>
    </alternativeName>
</protein>
<organism>
    <name type="scientific">Borreliella burgdorferi (strain ZS7)</name>
    <name type="common">Borrelia burgdorferi</name>
    <dbReference type="NCBI Taxonomy" id="445985"/>
    <lineage>
        <taxon>Bacteria</taxon>
        <taxon>Pseudomonadati</taxon>
        <taxon>Spirochaetota</taxon>
        <taxon>Spirochaetia</taxon>
        <taxon>Spirochaetales</taxon>
        <taxon>Borreliaceae</taxon>
        <taxon>Borreliella</taxon>
    </lineage>
</organism>
<gene>
    <name evidence="1" type="primary">rsmH</name>
    <name type="synonym">mraW</name>
    <name type="ordered locus">BbuZS7_0312</name>
</gene>
<comment type="function">
    <text evidence="1">Specifically methylates the N4 position of cytidine in position 1402 (C1402) of 16S rRNA.</text>
</comment>
<comment type="catalytic activity">
    <reaction evidence="1">
        <text>cytidine(1402) in 16S rRNA + S-adenosyl-L-methionine = N(4)-methylcytidine(1402) in 16S rRNA + S-adenosyl-L-homocysteine + H(+)</text>
        <dbReference type="Rhea" id="RHEA:42928"/>
        <dbReference type="Rhea" id="RHEA-COMP:10286"/>
        <dbReference type="Rhea" id="RHEA-COMP:10287"/>
        <dbReference type="ChEBI" id="CHEBI:15378"/>
        <dbReference type="ChEBI" id="CHEBI:57856"/>
        <dbReference type="ChEBI" id="CHEBI:59789"/>
        <dbReference type="ChEBI" id="CHEBI:74506"/>
        <dbReference type="ChEBI" id="CHEBI:82748"/>
        <dbReference type="EC" id="2.1.1.199"/>
    </reaction>
</comment>
<comment type="subcellular location">
    <subcellularLocation>
        <location evidence="1">Cytoplasm</location>
    </subcellularLocation>
</comment>
<comment type="similarity">
    <text evidence="1">Belongs to the methyltransferase superfamily. RsmH family.</text>
</comment>
<feature type="chain" id="PRO_1000134760" description="Ribosomal RNA small subunit methyltransferase H">
    <location>
        <begin position="1"/>
        <end position="296"/>
    </location>
</feature>
<feature type="binding site" evidence="1">
    <location>
        <begin position="38"/>
        <end position="40"/>
    </location>
    <ligand>
        <name>S-adenosyl-L-methionine</name>
        <dbReference type="ChEBI" id="CHEBI:59789"/>
    </ligand>
</feature>
<feature type="binding site" evidence="1">
    <location>
        <position position="57"/>
    </location>
    <ligand>
        <name>S-adenosyl-L-methionine</name>
        <dbReference type="ChEBI" id="CHEBI:59789"/>
    </ligand>
</feature>
<feature type="binding site" evidence="1">
    <location>
        <position position="88"/>
    </location>
    <ligand>
        <name>S-adenosyl-L-methionine</name>
        <dbReference type="ChEBI" id="CHEBI:59789"/>
    </ligand>
</feature>
<feature type="binding site" evidence="1">
    <location>
        <position position="103"/>
    </location>
    <ligand>
        <name>S-adenosyl-L-methionine</name>
        <dbReference type="ChEBI" id="CHEBI:59789"/>
    </ligand>
</feature>
<feature type="binding site" evidence="1">
    <location>
        <position position="110"/>
    </location>
    <ligand>
        <name>S-adenosyl-L-methionine</name>
        <dbReference type="ChEBI" id="CHEBI:59789"/>
    </ligand>
</feature>
<reference key="1">
    <citation type="journal article" date="2011" name="J. Bacteriol.">
        <title>Whole-genome sequences of thirteen isolates of Borrelia burgdorferi.</title>
        <authorList>
            <person name="Schutzer S.E."/>
            <person name="Fraser-Liggett C.M."/>
            <person name="Casjens S.R."/>
            <person name="Qiu W.G."/>
            <person name="Dunn J.J."/>
            <person name="Mongodin E.F."/>
            <person name="Luft B.J."/>
        </authorList>
    </citation>
    <scope>NUCLEOTIDE SEQUENCE [LARGE SCALE GENOMIC DNA]</scope>
    <source>
        <strain>ZS7</strain>
    </source>
</reference>
<dbReference type="EC" id="2.1.1.199" evidence="1"/>
<dbReference type="EMBL" id="CP001205">
    <property type="protein sequence ID" value="ACK74580.1"/>
    <property type="molecule type" value="Genomic_DNA"/>
</dbReference>
<dbReference type="RefSeq" id="WP_002656941.1">
    <property type="nucleotide sequence ID" value="NC_011728.1"/>
</dbReference>
<dbReference type="SMR" id="B7J1N4"/>
<dbReference type="GeneID" id="56567737"/>
<dbReference type="KEGG" id="bbz:BbuZS7_0312"/>
<dbReference type="HOGENOM" id="CLU_038422_3_0_12"/>
<dbReference type="Proteomes" id="UP000006901">
    <property type="component" value="Chromosome"/>
</dbReference>
<dbReference type="GO" id="GO:0005737">
    <property type="term" value="C:cytoplasm"/>
    <property type="evidence" value="ECO:0007669"/>
    <property type="project" value="UniProtKB-SubCell"/>
</dbReference>
<dbReference type="GO" id="GO:0071424">
    <property type="term" value="F:rRNA (cytosine-N4-)-methyltransferase activity"/>
    <property type="evidence" value="ECO:0007669"/>
    <property type="project" value="UniProtKB-UniRule"/>
</dbReference>
<dbReference type="GO" id="GO:0070475">
    <property type="term" value="P:rRNA base methylation"/>
    <property type="evidence" value="ECO:0007669"/>
    <property type="project" value="UniProtKB-UniRule"/>
</dbReference>
<dbReference type="Gene3D" id="1.10.150.170">
    <property type="entry name" value="Putative methyltransferase TM0872, insert domain"/>
    <property type="match status" value="1"/>
</dbReference>
<dbReference type="Gene3D" id="3.40.50.150">
    <property type="entry name" value="Vaccinia Virus protein VP39"/>
    <property type="match status" value="1"/>
</dbReference>
<dbReference type="HAMAP" id="MF_01007">
    <property type="entry name" value="16SrRNA_methyltr_H"/>
    <property type="match status" value="1"/>
</dbReference>
<dbReference type="InterPro" id="IPR002903">
    <property type="entry name" value="RsmH"/>
</dbReference>
<dbReference type="InterPro" id="IPR023397">
    <property type="entry name" value="SAM-dep_MeTrfase_MraW_recog"/>
</dbReference>
<dbReference type="InterPro" id="IPR029063">
    <property type="entry name" value="SAM-dependent_MTases_sf"/>
</dbReference>
<dbReference type="NCBIfam" id="TIGR00006">
    <property type="entry name" value="16S rRNA (cytosine(1402)-N(4))-methyltransferase RsmH"/>
    <property type="match status" value="1"/>
</dbReference>
<dbReference type="PANTHER" id="PTHR11265:SF0">
    <property type="entry name" value="12S RRNA N4-METHYLCYTIDINE METHYLTRANSFERASE"/>
    <property type="match status" value="1"/>
</dbReference>
<dbReference type="PANTHER" id="PTHR11265">
    <property type="entry name" value="S-ADENOSYL-METHYLTRANSFERASE MRAW"/>
    <property type="match status" value="1"/>
</dbReference>
<dbReference type="Pfam" id="PF01795">
    <property type="entry name" value="Methyltransf_5"/>
    <property type="match status" value="1"/>
</dbReference>
<dbReference type="PIRSF" id="PIRSF004486">
    <property type="entry name" value="MraW"/>
    <property type="match status" value="1"/>
</dbReference>
<dbReference type="SUPFAM" id="SSF81799">
    <property type="entry name" value="Putative methyltransferase TM0872, insert domain"/>
    <property type="match status" value="1"/>
</dbReference>
<dbReference type="SUPFAM" id="SSF53335">
    <property type="entry name" value="S-adenosyl-L-methionine-dependent methyltransferases"/>
    <property type="match status" value="1"/>
</dbReference>
<sequence length="296" mass="34396">MNNNAFHFPVLLDAICKLIEDLPVKSDLIYIDSTLGEGVHAKAILEKYDFLSLVGIERDPQILERARQFLSIFEERITYFNDWFDNFFVNYPLNVKANFILVDLGISMFHYKGSKKGFSFLEDEPLDMRLCSSSCKISAAEIVNTYSKYDLEALIYDLSNEHYSRRISKAIVEYRKIKKIETTKELQSIISKVYPFSKVKINPATKTFQALRIYVNDELARLKRSLPFWVENLAKDGILAIITFHSIEDRIVKDFFRSLSCDLYAKISKKPIMPSFDEIKKNKPSRSAKLRVIKKL</sequence>
<name>RSMH_BORBZ</name>
<keyword id="KW-0963">Cytoplasm</keyword>
<keyword id="KW-0489">Methyltransferase</keyword>
<keyword id="KW-0698">rRNA processing</keyword>
<keyword id="KW-0949">S-adenosyl-L-methionine</keyword>
<keyword id="KW-0808">Transferase</keyword>